<comment type="catalytic activity">
    <reaction evidence="1">
        <text>beta-D-fructose 1,6-bisphosphate + H2O = beta-D-fructose 6-phosphate + phosphate</text>
        <dbReference type="Rhea" id="RHEA:11064"/>
        <dbReference type="ChEBI" id="CHEBI:15377"/>
        <dbReference type="ChEBI" id="CHEBI:32966"/>
        <dbReference type="ChEBI" id="CHEBI:43474"/>
        <dbReference type="ChEBI" id="CHEBI:57634"/>
        <dbReference type="EC" id="3.1.3.11"/>
    </reaction>
</comment>
<comment type="cofactor">
    <cofactor evidence="1">
        <name>Mg(2+)</name>
        <dbReference type="ChEBI" id="CHEBI:18420"/>
    </cofactor>
    <text evidence="1">Binds 2 magnesium ions per subunit.</text>
</comment>
<comment type="pathway">
    <text evidence="1">Carbohydrate biosynthesis; gluconeogenesis.</text>
</comment>
<comment type="subunit">
    <text evidence="1">Homotetramer.</text>
</comment>
<comment type="subcellular location">
    <subcellularLocation>
        <location evidence="1">Cytoplasm</location>
    </subcellularLocation>
</comment>
<comment type="similarity">
    <text evidence="1">Belongs to the FBPase class 1 family.</text>
</comment>
<proteinExistence type="inferred from homology"/>
<evidence type="ECO:0000255" key="1">
    <source>
        <dbReference type="HAMAP-Rule" id="MF_01855"/>
    </source>
</evidence>
<keyword id="KW-0119">Carbohydrate metabolism</keyword>
<keyword id="KW-0963">Cytoplasm</keyword>
<keyword id="KW-0378">Hydrolase</keyword>
<keyword id="KW-0460">Magnesium</keyword>
<keyword id="KW-0479">Metal-binding</keyword>
<name>F16PA_BURCM</name>
<gene>
    <name evidence="1" type="primary">fbp</name>
    <name type="ordered locus">Bamb_0877</name>
</gene>
<accession>Q0BHD7</accession>
<dbReference type="EC" id="3.1.3.11" evidence="1"/>
<dbReference type="EMBL" id="CP000440">
    <property type="protein sequence ID" value="ABI86436.1"/>
    <property type="molecule type" value="Genomic_DNA"/>
</dbReference>
<dbReference type="RefSeq" id="WP_006753216.1">
    <property type="nucleotide sequence ID" value="NC_008390.1"/>
</dbReference>
<dbReference type="SMR" id="Q0BHD7"/>
<dbReference type="GeneID" id="93083712"/>
<dbReference type="KEGG" id="bam:Bamb_0877"/>
<dbReference type="PATRIC" id="fig|339670.21.peg.705"/>
<dbReference type="eggNOG" id="COG0158">
    <property type="taxonomic scope" value="Bacteria"/>
</dbReference>
<dbReference type="UniPathway" id="UPA00138"/>
<dbReference type="Proteomes" id="UP000000662">
    <property type="component" value="Chromosome 1"/>
</dbReference>
<dbReference type="GO" id="GO:0005829">
    <property type="term" value="C:cytosol"/>
    <property type="evidence" value="ECO:0007669"/>
    <property type="project" value="TreeGrafter"/>
</dbReference>
<dbReference type="GO" id="GO:0042132">
    <property type="term" value="F:fructose 1,6-bisphosphate 1-phosphatase activity"/>
    <property type="evidence" value="ECO:0007669"/>
    <property type="project" value="UniProtKB-UniRule"/>
</dbReference>
<dbReference type="GO" id="GO:0000287">
    <property type="term" value="F:magnesium ion binding"/>
    <property type="evidence" value="ECO:0007669"/>
    <property type="project" value="UniProtKB-UniRule"/>
</dbReference>
<dbReference type="GO" id="GO:0030388">
    <property type="term" value="P:fructose 1,6-bisphosphate metabolic process"/>
    <property type="evidence" value="ECO:0007669"/>
    <property type="project" value="TreeGrafter"/>
</dbReference>
<dbReference type="GO" id="GO:0006002">
    <property type="term" value="P:fructose 6-phosphate metabolic process"/>
    <property type="evidence" value="ECO:0007669"/>
    <property type="project" value="TreeGrafter"/>
</dbReference>
<dbReference type="GO" id="GO:0006000">
    <property type="term" value="P:fructose metabolic process"/>
    <property type="evidence" value="ECO:0007669"/>
    <property type="project" value="TreeGrafter"/>
</dbReference>
<dbReference type="GO" id="GO:0006094">
    <property type="term" value="P:gluconeogenesis"/>
    <property type="evidence" value="ECO:0007669"/>
    <property type="project" value="UniProtKB-UniRule"/>
</dbReference>
<dbReference type="GO" id="GO:0005986">
    <property type="term" value="P:sucrose biosynthetic process"/>
    <property type="evidence" value="ECO:0007669"/>
    <property type="project" value="TreeGrafter"/>
</dbReference>
<dbReference type="CDD" id="cd00354">
    <property type="entry name" value="FBPase"/>
    <property type="match status" value="1"/>
</dbReference>
<dbReference type="FunFam" id="3.30.540.10:FF:000006">
    <property type="entry name" value="Fructose-1,6-bisphosphatase class 1"/>
    <property type="match status" value="1"/>
</dbReference>
<dbReference type="FunFam" id="3.40.190.80:FF:000011">
    <property type="entry name" value="Fructose-1,6-bisphosphatase class 1"/>
    <property type="match status" value="1"/>
</dbReference>
<dbReference type="Gene3D" id="3.40.190.80">
    <property type="match status" value="1"/>
</dbReference>
<dbReference type="Gene3D" id="3.30.540.10">
    <property type="entry name" value="Fructose-1,6-Bisphosphatase, subunit A, domain 1"/>
    <property type="match status" value="1"/>
</dbReference>
<dbReference type="HAMAP" id="MF_01855">
    <property type="entry name" value="FBPase_class1"/>
    <property type="match status" value="1"/>
</dbReference>
<dbReference type="InterPro" id="IPR044015">
    <property type="entry name" value="FBPase_C_dom"/>
</dbReference>
<dbReference type="InterPro" id="IPR000146">
    <property type="entry name" value="FBPase_class-1"/>
</dbReference>
<dbReference type="InterPro" id="IPR033391">
    <property type="entry name" value="FBPase_N"/>
</dbReference>
<dbReference type="InterPro" id="IPR028343">
    <property type="entry name" value="FBPtase"/>
</dbReference>
<dbReference type="NCBIfam" id="NF006778">
    <property type="entry name" value="PRK09293.1-1"/>
    <property type="match status" value="1"/>
</dbReference>
<dbReference type="NCBIfam" id="NF006779">
    <property type="entry name" value="PRK09293.1-3"/>
    <property type="match status" value="1"/>
</dbReference>
<dbReference type="NCBIfam" id="NF006780">
    <property type="entry name" value="PRK09293.1-4"/>
    <property type="match status" value="1"/>
</dbReference>
<dbReference type="PANTHER" id="PTHR11556">
    <property type="entry name" value="FRUCTOSE-1,6-BISPHOSPHATASE-RELATED"/>
    <property type="match status" value="1"/>
</dbReference>
<dbReference type="PANTHER" id="PTHR11556:SF35">
    <property type="entry name" value="SEDOHEPTULOSE-1,7-BISPHOSPHATASE, CHLOROPLASTIC"/>
    <property type="match status" value="1"/>
</dbReference>
<dbReference type="Pfam" id="PF00316">
    <property type="entry name" value="FBPase"/>
    <property type="match status" value="1"/>
</dbReference>
<dbReference type="Pfam" id="PF18913">
    <property type="entry name" value="FBPase_C"/>
    <property type="match status" value="1"/>
</dbReference>
<dbReference type="PIRSF" id="PIRSF500210">
    <property type="entry name" value="FBPtase"/>
    <property type="match status" value="1"/>
</dbReference>
<dbReference type="PIRSF" id="PIRSF000904">
    <property type="entry name" value="FBPtase_SBPase"/>
    <property type="match status" value="1"/>
</dbReference>
<dbReference type="PRINTS" id="PR00115">
    <property type="entry name" value="F16BPHPHTASE"/>
</dbReference>
<dbReference type="SUPFAM" id="SSF56655">
    <property type="entry name" value="Carbohydrate phosphatase"/>
    <property type="match status" value="1"/>
</dbReference>
<organism>
    <name type="scientific">Burkholderia ambifaria (strain ATCC BAA-244 / DSM 16087 / CCUG 44356 / LMG 19182 / AMMD)</name>
    <name type="common">Burkholderia cepacia (strain AMMD)</name>
    <dbReference type="NCBI Taxonomy" id="339670"/>
    <lineage>
        <taxon>Bacteria</taxon>
        <taxon>Pseudomonadati</taxon>
        <taxon>Pseudomonadota</taxon>
        <taxon>Betaproteobacteria</taxon>
        <taxon>Burkholderiales</taxon>
        <taxon>Burkholderiaceae</taxon>
        <taxon>Burkholderia</taxon>
        <taxon>Burkholderia cepacia complex</taxon>
    </lineage>
</organism>
<protein>
    <recommendedName>
        <fullName evidence="1">Fructose-1,6-bisphosphatase class 1</fullName>
        <shortName evidence="1">FBPase class 1</shortName>
        <ecNumber evidence="1">3.1.3.11</ecNumber>
    </recommendedName>
    <alternativeName>
        <fullName evidence="1">D-fructose-1,6-bisphosphate 1-phosphohydrolase class 1</fullName>
    </alternativeName>
</protein>
<reference key="1">
    <citation type="submission" date="2006-08" db="EMBL/GenBank/DDBJ databases">
        <title>Complete sequence of chromosome 1 of Burkholderia cepacia AMMD.</title>
        <authorList>
            <person name="Copeland A."/>
            <person name="Lucas S."/>
            <person name="Lapidus A."/>
            <person name="Barry K."/>
            <person name="Detter J.C."/>
            <person name="Glavina del Rio T."/>
            <person name="Hammon N."/>
            <person name="Israni S."/>
            <person name="Pitluck S."/>
            <person name="Bruce D."/>
            <person name="Chain P."/>
            <person name="Malfatti S."/>
            <person name="Shin M."/>
            <person name="Vergez L."/>
            <person name="Schmutz J."/>
            <person name="Larimer F."/>
            <person name="Land M."/>
            <person name="Hauser L."/>
            <person name="Kyrpides N."/>
            <person name="Kim E."/>
            <person name="Parke J."/>
            <person name="Coenye T."/>
            <person name="Konstantinidis K."/>
            <person name="Ramette A."/>
            <person name="Tiedje J."/>
            <person name="Richardson P."/>
        </authorList>
    </citation>
    <scope>NUCLEOTIDE SEQUENCE [LARGE SCALE GENOMIC DNA]</scope>
    <source>
        <strain>ATCC BAA-244 / DSM 16087 / CCUG 44356 / LMG 19182 / AMMD</strain>
    </source>
</reference>
<sequence length="339" mass="37283">MSIARRTTLSKFLIEQQRETNNLPADLRLLIEVVARACKAISYNVSKGALGEALGTAGSENVQGEVQKKLDILSNEILLDANEWGGNLAAMASEEMETFFPIPANYPRGEYLLVFDPLDGSSNIDVNVSIGTIFSVLRCPDGKQATEESFLQPGTEQVAAGYAVYGPQTVFVLTTGNGVNCFTLDREVGSWVLTQSNMQIPADTREYAINASNARHWYEPVQRYVDELNAGKDGPRGDNFNMRWIASMVADVHRILNRGGIFMYPADKRTPDRPGKLRLMYEANPMSFIVEQAGGAATTGTQRIMEVQPTGLHQRVPVFLGSKNEVERVTGYHAEGEGK</sequence>
<feature type="chain" id="PRO_0000364484" description="Fructose-1,6-bisphosphatase class 1">
    <location>
        <begin position="1"/>
        <end position="339"/>
    </location>
</feature>
<feature type="binding site" evidence="1">
    <location>
        <position position="94"/>
    </location>
    <ligand>
        <name>Mg(2+)</name>
        <dbReference type="ChEBI" id="CHEBI:18420"/>
        <label>1</label>
    </ligand>
</feature>
<feature type="binding site" evidence="1">
    <location>
        <position position="116"/>
    </location>
    <ligand>
        <name>Mg(2+)</name>
        <dbReference type="ChEBI" id="CHEBI:18420"/>
        <label>1</label>
    </ligand>
</feature>
<feature type="binding site" evidence="1">
    <location>
        <position position="116"/>
    </location>
    <ligand>
        <name>Mg(2+)</name>
        <dbReference type="ChEBI" id="CHEBI:18420"/>
        <label>2</label>
    </ligand>
</feature>
<feature type="binding site" evidence="1">
    <location>
        <position position="118"/>
    </location>
    <ligand>
        <name>Mg(2+)</name>
        <dbReference type="ChEBI" id="CHEBI:18420"/>
        <label>1</label>
    </ligand>
</feature>
<feature type="binding site" evidence="1">
    <location>
        <begin position="119"/>
        <end position="122"/>
    </location>
    <ligand>
        <name>substrate</name>
    </ligand>
</feature>
<feature type="binding site" evidence="1">
    <location>
        <position position="119"/>
    </location>
    <ligand>
        <name>Mg(2+)</name>
        <dbReference type="ChEBI" id="CHEBI:18420"/>
        <label>2</label>
    </ligand>
</feature>
<feature type="binding site" evidence="1">
    <location>
        <position position="210"/>
    </location>
    <ligand>
        <name>substrate</name>
    </ligand>
</feature>
<feature type="binding site" evidence="1">
    <location>
        <position position="276"/>
    </location>
    <ligand>
        <name>substrate</name>
    </ligand>
</feature>
<feature type="binding site" evidence="1">
    <location>
        <position position="282"/>
    </location>
    <ligand>
        <name>Mg(2+)</name>
        <dbReference type="ChEBI" id="CHEBI:18420"/>
        <label>2</label>
    </ligand>
</feature>